<sequence length="15" mass="1456">VPATIPLTITNDSGG</sequence>
<evidence type="ECO:0000255" key="1"/>
<evidence type="ECO:0000305" key="2"/>
<proteinExistence type="evidence at protein level"/>
<protein>
    <recommendedName>
        <fullName>Glucan endo-1,3-beta-glucosidase 1</fullName>
        <ecNumber>3.2.1.39</ecNumber>
    </recommendedName>
    <alternativeName>
        <fullName>(1-&gt;3)-beta-glucan endohydrolase 1</fullName>
        <shortName>(1-&gt;3)-beta-glucanase 1</shortName>
    </alternativeName>
</protein>
<organism>
    <name type="scientific">Papiliotrema laurentii</name>
    <name type="common">Cryptococcus laurentii</name>
    <dbReference type="NCBI Taxonomy" id="5418"/>
    <lineage>
        <taxon>Eukaryota</taxon>
        <taxon>Fungi</taxon>
        <taxon>Dikarya</taxon>
        <taxon>Basidiomycota</taxon>
        <taxon>Agaricomycotina</taxon>
        <taxon>Tremellomycetes</taxon>
        <taxon>Tremellales</taxon>
        <taxon>Rhynchogastremaceae</taxon>
        <taxon>Papiliotrema</taxon>
    </lineage>
</organism>
<comment type="catalytic activity">
    <reaction>
        <text>Hydrolysis of (1-&gt;3)-beta-D-glucosidic linkages in (1-&gt;3)-beta-D-glucans.</text>
        <dbReference type="EC" id="3.2.1.39"/>
    </reaction>
</comment>
<comment type="similarity">
    <text evidence="1">Belongs to the glycosyl hydrolase 64 family.</text>
</comment>
<reference evidence="2" key="1">
    <citation type="submission" date="2007-07" db="UniProtKB">
        <authorList>
            <person name="Dutta D."/>
            <person name="Gachhui R."/>
        </authorList>
    </citation>
    <scope>PROTEIN SEQUENCE</scope>
    <source>
        <strain>RY1</strain>
    </source>
</reference>
<accession>P85203</accession>
<keyword id="KW-0903">Direct protein sequencing</keyword>
<keyword id="KW-0326">Glycosidase</keyword>
<keyword id="KW-0378">Hydrolase</keyword>
<feature type="chain" id="PRO_0000296382" description="Glucan endo-1,3-beta-glucosidase 1">
    <location>
        <begin position="1"/>
        <end position="15" status="greater than"/>
    </location>
</feature>
<feature type="non-terminal residue">
    <location>
        <position position="15"/>
    </location>
</feature>
<dbReference type="EC" id="3.2.1.39"/>
<dbReference type="GO" id="GO:0042973">
    <property type="term" value="F:glucan endo-1,3-beta-D-glucosidase activity"/>
    <property type="evidence" value="ECO:0007669"/>
    <property type="project" value="UniProtKB-EC"/>
</dbReference>
<name>E13B1_PAPLA</name>